<evidence type="ECO:0000250" key="1"/>
<evidence type="ECO:0000255" key="2">
    <source>
        <dbReference type="PROSITE-ProRule" id="PRU00434"/>
    </source>
</evidence>
<evidence type="ECO:0000305" key="3"/>
<sequence>MQQSLLTFEQVYYTYPGTQQSVLNGITLQIPQGKRCALIGRNGCGKTTLFSLANGLYKPQQGRVYWQEKALQYDRKNLMQLRQKVGLVFQNPEQQLVASTVEEDISYGLCNLGLPIADIQQRVTQALVEFELTELAERPVHHLSLGQKKRVSLADVMVLRPELLLLDEPTAYLDRPQSRNLMAMLNKIYKSGTTILMASHDLDLVYCWSDWVFVMDAGRLILEGKPEDIFSQREILDSIELGLPPIYEIFITEELATKEHNSENFRRRILQFFC</sequence>
<feature type="chain" id="PRO_0000091968" description="Putative ABC transporter ATP-binding protein alr3946">
    <location>
        <begin position="1"/>
        <end position="274"/>
    </location>
</feature>
<feature type="domain" description="ABC transporter" evidence="2">
    <location>
        <begin position="6"/>
        <end position="242"/>
    </location>
</feature>
<feature type="binding site" evidence="2">
    <location>
        <begin position="40"/>
        <end position="47"/>
    </location>
    <ligand>
        <name>ATP</name>
        <dbReference type="ChEBI" id="CHEBI:30616"/>
    </ligand>
</feature>
<reference key="1">
    <citation type="journal article" date="2001" name="DNA Res.">
        <title>Complete genomic sequence of the filamentous nitrogen-fixing cyanobacterium Anabaena sp. strain PCC 7120.</title>
        <authorList>
            <person name="Kaneko T."/>
            <person name="Nakamura Y."/>
            <person name="Wolk C.P."/>
            <person name="Kuritz T."/>
            <person name="Sasamoto S."/>
            <person name="Watanabe A."/>
            <person name="Iriguchi M."/>
            <person name="Ishikawa A."/>
            <person name="Kawashima K."/>
            <person name="Kimura T."/>
            <person name="Kishida Y."/>
            <person name="Kohara M."/>
            <person name="Matsumoto M."/>
            <person name="Matsuno A."/>
            <person name="Muraki A."/>
            <person name="Nakazaki N."/>
            <person name="Shimpo S."/>
            <person name="Sugimoto M."/>
            <person name="Takazawa M."/>
            <person name="Yamada M."/>
            <person name="Yasuda M."/>
            <person name="Tabata S."/>
        </authorList>
    </citation>
    <scope>NUCLEOTIDE SEQUENCE [LARGE SCALE GENOMIC DNA]</scope>
    <source>
        <strain>PCC 7120 / SAG 25.82 / UTEX 2576</strain>
    </source>
</reference>
<proteinExistence type="inferred from homology"/>
<name>Y3946_NOSS1</name>
<comment type="function">
    <text evidence="1">Probably part of an ABC transporter complex. Responsible for energy coupling to the transport system (By similarity).</text>
</comment>
<comment type="subcellular location">
    <subcellularLocation>
        <location evidence="1">Cell inner membrane</location>
        <topology evidence="1">Peripheral membrane protein</topology>
    </subcellularLocation>
</comment>
<comment type="similarity">
    <text evidence="3">Belongs to the ABC transporter superfamily.</text>
</comment>
<accession>Q8YQ88</accession>
<organism>
    <name type="scientific">Nostoc sp. (strain PCC 7120 / SAG 25.82 / UTEX 2576)</name>
    <dbReference type="NCBI Taxonomy" id="103690"/>
    <lineage>
        <taxon>Bacteria</taxon>
        <taxon>Bacillati</taxon>
        <taxon>Cyanobacteriota</taxon>
        <taxon>Cyanophyceae</taxon>
        <taxon>Nostocales</taxon>
        <taxon>Nostocaceae</taxon>
        <taxon>Nostoc</taxon>
    </lineage>
</organism>
<dbReference type="EC" id="7.-.-.-"/>
<dbReference type="EMBL" id="BA000019">
    <property type="protein sequence ID" value="BAB75645.1"/>
    <property type="molecule type" value="Genomic_DNA"/>
</dbReference>
<dbReference type="PIR" id="AC2299">
    <property type="entry name" value="AC2299"/>
</dbReference>
<dbReference type="RefSeq" id="WP_010998087.1">
    <property type="nucleotide sequence ID" value="NZ_RSCN01000045.1"/>
</dbReference>
<dbReference type="SMR" id="Q8YQ88"/>
<dbReference type="STRING" id="103690.gene:10495988"/>
<dbReference type="KEGG" id="ana:alr3946"/>
<dbReference type="eggNOG" id="COG1122">
    <property type="taxonomic scope" value="Bacteria"/>
</dbReference>
<dbReference type="OrthoDB" id="9784332at2"/>
<dbReference type="Proteomes" id="UP000002483">
    <property type="component" value="Chromosome"/>
</dbReference>
<dbReference type="GO" id="GO:0043190">
    <property type="term" value="C:ATP-binding cassette (ABC) transporter complex"/>
    <property type="evidence" value="ECO:0007669"/>
    <property type="project" value="TreeGrafter"/>
</dbReference>
<dbReference type="GO" id="GO:0005524">
    <property type="term" value="F:ATP binding"/>
    <property type="evidence" value="ECO:0007669"/>
    <property type="project" value="UniProtKB-KW"/>
</dbReference>
<dbReference type="GO" id="GO:0016887">
    <property type="term" value="F:ATP hydrolysis activity"/>
    <property type="evidence" value="ECO:0007669"/>
    <property type="project" value="InterPro"/>
</dbReference>
<dbReference type="GO" id="GO:0042626">
    <property type="term" value="F:ATPase-coupled transmembrane transporter activity"/>
    <property type="evidence" value="ECO:0007669"/>
    <property type="project" value="TreeGrafter"/>
</dbReference>
<dbReference type="GO" id="GO:0006824">
    <property type="term" value="P:cobalt ion transport"/>
    <property type="evidence" value="ECO:0007669"/>
    <property type="project" value="InterPro"/>
</dbReference>
<dbReference type="CDD" id="cd03225">
    <property type="entry name" value="ABC_cobalt_CbiO_domain1"/>
    <property type="match status" value="1"/>
</dbReference>
<dbReference type="FunFam" id="3.40.50.300:FF:000224">
    <property type="entry name" value="Energy-coupling factor transporter ATP-binding protein EcfA"/>
    <property type="match status" value="1"/>
</dbReference>
<dbReference type="Gene3D" id="3.40.50.300">
    <property type="entry name" value="P-loop containing nucleotide triphosphate hydrolases"/>
    <property type="match status" value="1"/>
</dbReference>
<dbReference type="InterPro" id="IPR003593">
    <property type="entry name" value="AAA+_ATPase"/>
</dbReference>
<dbReference type="InterPro" id="IPR003439">
    <property type="entry name" value="ABC_transporter-like_ATP-bd"/>
</dbReference>
<dbReference type="InterPro" id="IPR017871">
    <property type="entry name" value="ABC_transporter-like_CS"/>
</dbReference>
<dbReference type="InterPro" id="IPR015856">
    <property type="entry name" value="ABC_transpr_CbiO/EcfA_su"/>
</dbReference>
<dbReference type="InterPro" id="IPR005876">
    <property type="entry name" value="Co_trans_ATP-bd"/>
</dbReference>
<dbReference type="InterPro" id="IPR050095">
    <property type="entry name" value="ECF_ABC_transporter_ATP-bd"/>
</dbReference>
<dbReference type="InterPro" id="IPR027417">
    <property type="entry name" value="P-loop_NTPase"/>
</dbReference>
<dbReference type="NCBIfam" id="TIGR01166">
    <property type="entry name" value="cbiO"/>
    <property type="match status" value="1"/>
</dbReference>
<dbReference type="PANTHER" id="PTHR43553:SF24">
    <property type="entry name" value="ENERGY-COUPLING FACTOR TRANSPORTER ATP-BINDING PROTEIN ECFA1"/>
    <property type="match status" value="1"/>
</dbReference>
<dbReference type="PANTHER" id="PTHR43553">
    <property type="entry name" value="HEAVY METAL TRANSPORTER"/>
    <property type="match status" value="1"/>
</dbReference>
<dbReference type="Pfam" id="PF00005">
    <property type="entry name" value="ABC_tran"/>
    <property type="match status" value="1"/>
</dbReference>
<dbReference type="SMART" id="SM00382">
    <property type="entry name" value="AAA"/>
    <property type="match status" value="1"/>
</dbReference>
<dbReference type="SUPFAM" id="SSF52540">
    <property type="entry name" value="P-loop containing nucleoside triphosphate hydrolases"/>
    <property type="match status" value="1"/>
</dbReference>
<dbReference type="PROSITE" id="PS00211">
    <property type="entry name" value="ABC_TRANSPORTER_1"/>
    <property type="match status" value="1"/>
</dbReference>
<dbReference type="PROSITE" id="PS50893">
    <property type="entry name" value="ABC_TRANSPORTER_2"/>
    <property type="match status" value="1"/>
</dbReference>
<gene>
    <name type="ordered locus">alr3946</name>
</gene>
<keyword id="KW-0067">ATP-binding</keyword>
<keyword id="KW-0997">Cell inner membrane</keyword>
<keyword id="KW-1003">Cell membrane</keyword>
<keyword id="KW-0472">Membrane</keyword>
<keyword id="KW-0547">Nucleotide-binding</keyword>
<keyword id="KW-1185">Reference proteome</keyword>
<keyword id="KW-1278">Translocase</keyword>
<keyword id="KW-0813">Transport</keyword>
<protein>
    <recommendedName>
        <fullName>Putative ABC transporter ATP-binding protein alr3946</fullName>
        <ecNumber>7.-.-.-</ecNumber>
    </recommendedName>
</protein>